<name>MDM12_PENRW</name>
<keyword id="KW-0256">Endoplasmic reticulum</keyword>
<keyword id="KW-0445">Lipid transport</keyword>
<keyword id="KW-0446">Lipid-binding</keyword>
<keyword id="KW-0472">Membrane</keyword>
<keyword id="KW-0496">Mitochondrion</keyword>
<keyword id="KW-1000">Mitochondrion outer membrane</keyword>
<keyword id="KW-1185">Reference proteome</keyword>
<keyword id="KW-0813">Transport</keyword>
<gene>
    <name evidence="1" type="primary">mdm12</name>
    <name type="ORF">Pc16g13750</name>
</gene>
<reference key="1">
    <citation type="journal article" date="2008" name="Nat. Biotechnol.">
        <title>Genome sequencing and analysis of the filamentous fungus Penicillium chrysogenum.</title>
        <authorList>
            <person name="van den Berg M.A."/>
            <person name="Albang R."/>
            <person name="Albermann K."/>
            <person name="Badger J.H."/>
            <person name="Daran J.-M."/>
            <person name="Driessen A.J.M."/>
            <person name="Garcia-Estrada C."/>
            <person name="Fedorova N.D."/>
            <person name="Harris D.M."/>
            <person name="Heijne W.H.M."/>
            <person name="Joardar V.S."/>
            <person name="Kiel J.A.K.W."/>
            <person name="Kovalchuk A."/>
            <person name="Martin J.F."/>
            <person name="Nierman W.C."/>
            <person name="Nijland J.G."/>
            <person name="Pronk J.T."/>
            <person name="Roubos J.A."/>
            <person name="van der Klei I.J."/>
            <person name="van Peij N.N.M.E."/>
            <person name="Veenhuis M."/>
            <person name="von Doehren H."/>
            <person name="Wagner C."/>
            <person name="Wortman J.R."/>
            <person name="Bovenberg R.A.L."/>
        </authorList>
    </citation>
    <scope>NUCLEOTIDE SEQUENCE [LARGE SCALE GENOMIC DNA]</scope>
    <source>
        <strain>ATCC 28089 / DSM 1075 / NRRL 1951 / Wisconsin 54-1255</strain>
    </source>
</reference>
<accession>B6HAR6</accession>
<comment type="function">
    <text evidence="1">Component of the ERMES/MDM complex, which serves as a molecular tether to connect the endoplasmic reticulum (ER) and mitochondria. Components of this complex are involved in the control of mitochondrial shape and protein biogenesis, and function in nonvesicular lipid trafficking between the ER and mitochondria. Mdm12 is required for the interaction of the ER-resident membrane protein mmm1 and the outer mitochondrial membrane-resident beta-barrel protein mdm10. The mdm12-mmm1 subcomplex functions in the major beta-barrel assembly pathway that is responsible for biogenesis of all mitochondrial outer membrane beta-barrel proteins, and acts in a late step after the SAM complex. The mdm10-mdm12-mmm1 subcomplex further acts in the TOM40-specific pathway after the action of the mdm12-mmm1 complex. Essential for establishing and maintaining the structure of mitochondria and maintenance of mtDNA nucleoids.</text>
</comment>
<comment type="subunit">
    <text evidence="1">Component of the ER-mitochondria encounter structure (ERMES) or MDM complex, composed of mmm1, mdm10, mdm12 and mdm34. A mmm1 homodimer associates with one molecule of mdm12 on each side in a pairwise head-to-tail manner, and the SMP-LTD domains of mmm1 and mdm12 generate a continuous hydrophobic tunnel for phospholipid trafficking.</text>
</comment>
<comment type="subcellular location">
    <subcellularLocation>
        <location evidence="1">Mitochondrion outer membrane</location>
        <topology evidence="1">Peripheral membrane protein</topology>
        <orientation evidence="1">Cytoplasmic side</orientation>
    </subcellularLocation>
    <subcellularLocation>
        <location evidence="1">Endoplasmic reticulum membrane</location>
        <topology evidence="1">Peripheral membrane protein</topology>
        <orientation evidence="1">Cytoplasmic side</orientation>
    </subcellularLocation>
    <text evidence="1">The ERMES/MDM complex localizes to a few discrete foci (around 10 per single cell), that represent mitochondria-endoplasmic reticulum junctions. These foci are often found next to mtDNA nucleoids.</text>
</comment>
<comment type="domain">
    <text evidence="1">The SMP-LTD domain is a barrel-like domain that can bind various types of glycerophospholipids in its interior and mediate their transfer between two adjacent bilayers.</text>
</comment>
<comment type="similarity">
    <text evidence="1">Belongs to the MDM12 family.</text>
</comment>
<sequence length="438" mass="47561">MSIEVDWAAATSGPDGEALAERIRSFVHDKFQEITLPRFIRSVQVHSFDFGTIAPDLEVKDICEPFADFYEEEADDADTSVASEELGHELHESPYEDDMTYNPTAHNLHSFSHHPYPGEGFQPSALRSPLGDHLNPHFMPRASTPGIPGGTSTLGYHMRSLGGLSGTQTPLAAVAGGTSFASGWSDSGMGVGPRSQAARPAGPHHLAEPDLDTTNSTSRPSTANTLPSHPSLGHSGSSGSNPHTSDPTDAPQPSIETSDDPAAEGHSLPIPPRMRERRPEDFQVLCHAKYAGDVRMSLTAEILLDYPMPSFVGLPLKLNVTGITFDGVAVVAYIRKRVHFCFLSAEDADALLGSEQSQGSQNPSDDGRPRSGGDQKDKELKRQGGLLQEIRVDSEIGRKEDGKQVLKNVGKVERFVLAQVRRIFEEELVYPSFWTFLV</sequence>
<evidence type="ECO:0000255" key="1">
    <source>
        <dbReference type="HAMAP-Rule" id="MF_03104"/>
    </source>
</evidence>
<evidence type="ECO:0000256" key="2">
    <source>
        <dbReference type="SAM" id="MobiDB-lite"/>
    </source>
</evidence>
<feature type="chain" id="PRO_0000384300" description="Mitochondrial distribution and morphology protein 12">
    <location>
        <begin position="1"/>
        <end position="438"/>
    </location>
</feature>
<feature type="domain" description="SMP-LTD" evidence="1">
    <location>
        <begin position="1"/>
        <end position="438"/>
    </location>
</feature>
<feature type="region of interest" description="Disordered" evidence="2">
    <location>
        <begin position="110"/>
        <end position="154"/>
    </location>
</feature>
<feature type="region of interest" description="Disordered" evidence="2">
    <location>
        <begin position="185"/>
        <end position="277"/>
    </location>
</feature>
<feature type="region of interest" description="Disordered" evidence="2">
    <location>
        <begin position="353"/>
        <end position="379"/>
    </location>
</feature>
<feature type="compositionally biased region" description="Polar residues" evidence="2">
    <location>
        <begin position="212"/>
        <end position="226"/>
    </location>
</feature>
<feature type="compositionally biased region" description="Low complexity" evidence="2">
    <location>
        <begin position="227"/>
        <end position="245"/>
    </location>
</feature>
<feature type="compositionally biased region" description="Polar residues" evidence="2">
    <location>
        <begin position="354"/>
        <end position="364"/>
    </location>
</feature>
<feature type="compositionally biased region" description="Basic and acidic residues" evidence="2">
    <location>
        <begin position="365"/>
        <end position="379"/>
    </location>
</feature>
<dbReference type="EMBL" id="AM920431">
    <property type="protein sequence ID" value="CAP94045.1"/>
    <property type="molecule type" value="Genomic_DNA"/>
</dbReference>
<dbReference type="RefSeq" id="XP_002561674.1">
    <property type="nucleotide sequence ID" value="XM_002561628.1"/>
</dbReference>
<dbReference type="SMR" id="B6HAR6"/>
<dbReference type="STRING" id="500485.B6HAR6"/>
<dbReference type="GeneID" id="8311451"/>
<dbReference type="KEGG" id="pcs:N7525_010391"/>
<dbReference type="VEuPathDB" id="FungiDB:PCH_Pc16g13750"/>
<dbReference type="eggNOG" id="ENOG502S3PB">
    <property type="taxonomic scope" value="Eukaryota"/>
</dbReference>
<dbReference type="HOGENOM" id="CLU_026794_0_0_1"/>
<dbReference type="OMA" id="KRAHFCF"/>
<dbReference type="OrthoDB" id="3356905at2759"/>
<dbReference type="BioCyc" id="PCHR:PC16G13750-MONOMER"/>
<dbReference type="Proteomes" id="UP000000724">
    <property type="component" value="Contig Pc00c16"/>
</dbReference>
<dbReference type="GO" id="GO:0005789">
    <property type="term" value="C:endoplasmic reticulum membrane"/>
    <property type="evidence" value="ECO:0007669"/>
    <property type="project" value="UniProtKB-SubCell"/>
</dbReference>
<dbReference type="GO" id="GO:0032865">
    <property type="term" value="C:ERMES complex"/>
    <property type="evidence" value="ECO:0007669"/>
    <property type="project" value="UniProtKB-UniRule"/>
</dbReference>
<dbReference type="GO" id="GO:0008289">
    <property type="term" value="F:lipid binding"/>
    <property type="evidence" value="ECO:0007669"/>
    <property type="project" value="UniProtKB-KW"/>
</dbReference>
<dbReference type="GO" id="GO:0000002">
    <property type="term" value="P:mitochondrial genome maintenance"/>
    <property type="evidence" value="ECO:0007669"/>
    <property type="project" value="UniProtKB-UniRule"/>
</dbReference>
<dbReference type="GO" id="GO:1990456">
    <property type="term" value="P:mitochondrion-endoplasmic reticulum membrane tethering"/>
    <property type="evidence" value="ECO:0007669"/>
    <property type="project" value="TreeGrafter"/>
</dbReference>
<dbReference type="GO" id="GO:0015914">
    <property type="term" value="P:phospholipid transport"/>
    <property type="evidence" value="ECO:0007669"/>
    <property type="project" value="TreeGrafter"/>
</dbReference>
<dbReference type="GO" id="GO:0045040">
    <property type="term" value="P:protein insertion into mitochondrial outer membrane"/>
    <property type="evidence" value="ECO:0007669"/>
    <property type="project" value="UniProtKB-UniRule"/>
</dbReference>
<dbReference type="CDD" id="cd21672">
    <property type="entry name" value="SMP_Mdm12"/>
    <property type="match status" value="1"/>
</dbReference>
<dbReference type="HAMAP" id="MF_03104">
    <property type="entry name" value="Mdm12"/>
    <property type="match status" value="1"/>
</dbReference>
<dbReference type="InterPro" id="IPR027532">
    <property type="entry name" value="Mdm12"/>
</dbReference>
<dbReference type="InterPro" id="IPR019411">
    <property type="entry name" value="MMM1_dom"/>
</dbReference>
<dbReference type="InterPro" id="IPR031468">
    <property type="entry name" value="SMP_LBD"/>
</dbReference>
<dbReference type="PANTHER" id="PTHR28204">
    <property type="entry name" value="MITOCHONDRIAL DISTRIBUTION AND MORPHOLOGY PROTEIN 12"/>
    <property type="match status" value="1"/>
</dbReference>
<dbReference type="PANTHER" id="PTHR28204:SF1">
    <property type="entry name" value="MITOCHONDRIAL DISTRIBUTION AND MORPHOLOGY PROTEIN 12"/>
    <property type="match status" value="1"/>
</dbReference>
<dbReference type="Pfam" id="PF10296">
    <property type="entry name" value="MMM1"/>
    <property type="match status" value="1"/>
</dbReference>
<dbReference type="PROSITE" id="PS51847">
    <property type="entry name" value="SMP"/>
    <property type="match status" value="1"/>
</dbReference>
<proteinExistence type="inferred from homology"/>
<protein>
    <recommendedName>
        <fullName evidence="1">Mitochondrial distribution and morphology protein 12</fullName>
    </recommendedName>
    <alternativeName>
        <fullName evidence="1">Mitochondrial inheritance component MDM12</fullName>
    </alternativeName>
</protein>
<organism>
    <name type="scientific">Penicillium rubens (strain ATCC 28089 / DSM 1075 / NRRL 1951 / Wisconsin 54-1255)</name>
    <name type="common">Penicillium chrysogenum</name>
    <dbReference type="NCBI Taxonomy" id="500485"/>
    <lineage>
        <taxon>Eukaryota</taxon>
        <taxon>Fungi</taxon>
        <taxon>Dikarya</taxon>
        <taxon>Ascomycota</taxon>
        <taxon>Pezizomycotina</taxon>
        <taxon>Eurotiomycetes</taxon>
        <taxon>Eurotiomycetidae</taxon>
        <taxon>Eurotiales</taxon>
        <taxon>Aspergillaceae</taxon>
        <taxon>Penicillium</taxon>
        <taxon>Penicillium chrysogenum species complex</taxon>
    </lineage>
</organism>